<protein>
    <recommendedName>
        <fullName evidence="1">Small ribosomal subunit protein uS10</fullName>
    </recommendedName>
    <alternativeName>
        <fullName evidence="2">30S ribosomal protein S10</fullName>
    </alternativeName>
</protein>
<proteinExistence type="evidence at protein level"/>
<evidence type="ECO:0000255" key="1">
    <source>
        <dbReference type="HAMAP-Rule" id="MF_00508"/>
    </source>
</evidence>
<evidence type="ECO:0000305" key="2"/>
<evidence type="ECO:0007829" key="3">
    <source>
        <dbReference type="PDB" id="8CVO"/>
    </source>
</evidence>
<accession>Q6A6M5</accession>
<name>RS10_CUTAK</name>
<feature type="chain" id="PRO_0000146574" description="Small ribosomal subunit protein uS10">
    <location>
        <begin position="1"/>
        <end position="103"/>
    </location>
</feature>
<feature type="strand" evidence="3">
    <location>
        <begin position="7"/>
        <end position="13"/>
    </location>
</feature>
<feature type="helix" evidence="3">
    <location>
        <begin position="15"/>
        <end position="31"/>
    </location>
</feature>
<feature type="strand" evidence="3">
    <location>
        <begin position="36"/>
        <end position="57"/>
    </location>
</feature>
<feature type="strand" evidence="3">
    <location>
        <begin position="60"/>
        <end position="76"/>
    </location>
</feature>
<feature type="helix" evidence="3">
    <location>
        <begin position="81"/>
        <end position="89"/>
    </location>
</feature>
<feature type="strand" evidence="3">
    <location>
        <begin position="97"/>
        <end position="101"/>
    </location>
</feature>
<dbReference type="EMBL" id="AE017283">
    <property type="protein sequence ID" value="AAT83588.1"/>
    <property type="molecule type" value="Genomic_DNA"/>
</dbReference>
<dbReference type="RefSeq" id="WP_002514870.1">
    <property type="nucleotide sequence ID" value="NZ_CP025935.1"/>
</dbReference>
<dbReference type="PDB" id="8CRX">
    <property type="method" value="EM"/>
    <property type="resolution" value="2.78 A"/>
    <property type="chains" value="M=1-103"/>
</dbReference>
<dbReference type="PDB" id="8CVO">
    <property type="method" value="EM"/>
    <property type="resolution" value="2.95 A"/>
    <property type="chains" value="M=1-103"/>
</dbReference>
<dbReference type="PDBsum" id="8CRX"/>
<dbReference type="PDBsum" id="8CVO"/>
<dbReference type="SMR" id="Q6A6M5"/>
<dbReference type="EnsemblBacteria" id="AAT83588">
    <property type="protein sequence ID" value="AAT83588"/>
    <property type="gene ID" value="PPA1865"/>
</dbReference>
<dbReference type="GeneID" id="92881211"/>
<dbReference type="KEGG" id="pac:PPA1865"/>
<dbReference type="eggNOG" id="COG0051">
    <property type="taxonomic scope" value="Bacteria"/>
</dbReference>
<dbReference type="HOGENOM" id="CLU_122625_1_3_11"/>
<dbReference type="Proteomes" id="UP000000603">
    <property type="component" value="Chromosome"/>
</dbReference>
<dbReference type="GO" id="GO:1990904">
    <property type="term" value="C:ribonucleoprotein complex"/>
    <property type="evidence" value="ECO:0007669"/>
    <property type="project" value="UniProtKB-KW"/>
</dbReference>
<dbReference type="GO" id="GO:0005840">
    <property type="term" value="C:ribosome"/>
    <property type="evidence" value="ECO:0007669"/>
    <property type="project" value="UniProtKB-KW"/>
</dbReference>
<dbReference type="GO" id="GO:0003735">
    <property type="term" value="F:structural constituent of ribosome"/>
    <property type="evidence" value="ECO:0007669"/>
    <property type="project" value="InterPro"/>
</dbReference>
<dbReference type="GO" id="GO:0000049">
    <property type="term" value="F:tRNA binding"/>
    <property type="evidence" value="ECO:0007669"/>
    <property type="project" value="UniProtKB-UniRule"/>
</dbReference>
<dbReference type="GO" id="GO:0006412">
    <property type="term" value="P:translation"/>
    <property type="evidence" value="ECO:0007669"/>
    <property type="project" value="UniProtKB-UniRule"/>
</dbReference>
<dbReference type="FunFam" id="3.30.70.600:FF:000001">
    <property type="entry name" value="30S ribosomal protein S10"/>
    <property type="match status" value="1"/>
</dbReference>
<dbReference type="Gene3D" id="3.30.70.600">
    <property type="entry name" value="Ribosomal protein S10 domain"/>
    <property type="match status" value="1"/>
</dbReference>
<dbReference type="HAMAP" id="MF_00508">
    <property type="entry name" value="Ribosomal_uS10"/>
    <property type="match status" value="1"/>
</dbReference>
<dbReference type="InterPro" id="IPR001848">
    <property type="entry name" value="Ribosomal_uS10"/>
</dbReference>
<dbReference type="InterPro" id="IPR018268">
    <property type="entry name" value="Ribosomal_uS10_CS"/>
</dbReference>
<dbReference type="InterPro" id="IPR027486">
    <property type="entry name" value="Ribosomal_uS10_dom"/>
</dbReference>
<dbReference type="InterPro" id="IPR036838">
    <property type="entry name" value="Ribosomal_uS10_dom_sf"/>
</dbReference>
<dbReference type="NCBIfam" id="NF001861">
    <property type="entry name" value="PRK00596.1"/>
    <property type="match status" value="1"/>
</dbReference>
<dbReference type="NCBIfam" id="TIGR01049">
    <property type="entry name" value="rpsJ_bact"/>
    <property type="match status" value="1"/>
</dbReference>
<dbReference type="PANTHER" id="PTHR11700">
    <property type="entry name" value="30S RIBOSOMAL PROTEIN S10 FAMILY MEMBER"/>
    <property type="match status" value="1"/>
</dbReference>
<dbReference type="Pfam" id="PF00338">
    <property type="entry name" value="Ribosomal_S10"/>
    <property type="match status" value="1"/>
</dbReference>
<dbReference type="PRINTS" id="PR00971">
    <property type="entry name" value="RIBOSOMALS10"/>
</dbReference>
<dbReference type="SMART" id="SM01403">
    <property type="entry name" value="Ribosomal_S10"/>
    <property type="match status" value="1"/>
</dbReference>
<dbReference type="SUPFAM" id="SSF54999">
    <property type="entry name" value="Ribosomal protein S10"/>
    <property type="match status" value="1"/>
</dbReference>
<dbReference type="PROSITE" id="PS00361">
    <property type="entry name" value="RIBOSOMAL_S10"/>
    <property type="match status" value="1"/>
</dbReference>
<organism>
    <name type="scientific">Cutibacterium acnes (strain DSM 16379 / KPA171202)</name>
    <name type="common">Propionibacterium acnes</name>
    <dbReference type="NCBI Taxonomy" id="267747"/>
    <lineage>
        <taxon>Bacteria</taxon>
        <taxon>Bacillati</taxon>
        <taxon>Actinomycetota</taxon>
        <taxon>Actinomycetes</taxon>
        <taxon>Propionibacteriales</taxon>
        <taxon>Propionibacteriaceae</taxon>
        <taxon>Cutibacterium</taxon>
    </lineage>
</organism>
<reference key="1">
    <citation type="journal article" date="2004" name="Science">
        <title>The complete genome sequence of Propionibacterium acnes, a commensal of human skin.</title>
        <authorList>
            <person name="Brueggemann H."/>
            <person name="Henne A."/>
            <person name="Hoster F."/>
            <person name="Liesegang H."/>
            <person name="Wiezer A."/>
            <person name="Strittmatter A."/>
            <person name="Hujer S."/>
            <person name="Duerre P."/>
            <person name="Gottschalk G."/>
        </authorList>
    </citation>
    <scope>NUCLEOTIDE SEQUENCE [LARGE SCALE GENOMIC DNA]</scope>
    <source>
        <strain>DSM 16379 / KPA171202</strain>
    </source>
</reference>
<comment type="function">
    <text evidence="1">Involved in the binding of tRNA to the ribosomes.</text>
</comment>
<comment type="subunit">
    <text evidence="1">Part of the 30S ribosomal subunit.</text>
</comment>
<comment type="similarity">
    <text evidence="1">Belongs to the universal ribosomal protein uS10 family.</text>
</comment>
<gene>
    <name evidence="1" type="primary">rpsJ</name>
    <name type="ordered locus">PPA1865</name>
</gene>
<keyword id="KW-0002">3D-structure</keyword>
<keyword id="KW-0687">Ribonucleoprotein</keyword>
<keyword id="KW-0689">Ribosomal protein</keyword>
<sequence length="103" mass="11728">MAGQKIRIRLRAYDHEVIDSSARKIVDTVTRTGAKVAGPVPLPTEKNVFCVIRSPHKYKDSREHFEMRTHKRLIDILEPTPKTVDSLMRLDLPAGVDIEIKLP</sequence>